<keyword id="KW-0002">3D-structure</keyword>
<keyword id="KW-0597">Phosphoprotein</keyword>
<keyword id="KW-1185">Reference proteome</keyword>
<proteinExistence type="evidence at protein level"/>
<protein>
    <recommendedName>
        <fullName>Uncharacterized protein YFR016C</fullName>
    </recommendedName>
</protein>
<name>YFI6_YEAST</name>
<feature type="chain" id="PRO_0000202686" description="Uncharacterized protein YFR016C">
    <location>
        <begin position="1"/>
        <end position="1233"/>
    </location>
</feature>
<feature type="domain" description="Glutaredoxin" evidence="1">
    <location>
        <begin position="1132"/>
        <end position="1233"/>
    </location>
</feature>
<feature type="region of interest" description="Disordered" evidence="2">
    <location>
        <begin position="1"/>
        <end position="39"/>
    </location>
</feature>
<feature type="region of interest" description="Disordered" evidence="2">
    <location>
        <begin position="65"/>
        <end position="116"/>
    </location>
</feature>
<feature type="region of interest" description="Disordered" evidence="2">
    <location>
        <begin position="160"/>
        <end position="211"/>
    </location>
</feature>
<feature type="region of interest" description="Disordered" evidence="2">
    <location>
        <begin position="250"/>
        <end position="577"/>
    </location>
</feature>
<feature type="region of interest" description="Disordered" evidence="2">
    <location>
        <begin position="594"/>
        <end position="825"/>
    </location>
</feature>
<feature type="region of interest" description="Disordered" evidence="2">
    <location>
        <begin position="851"/>
        <end position="872"/>
    </location>
</feature>
<feature type="region of interest" description="Disordered" evidence="2">
    <location>
        <begin position="902"/>
        <end position="955"/>
    </location>
</feature>
<feature type="region of interest" description="Disordered" evidence="2">
    <location>
        <begin position="984"/>
        <end position="1071"/>
    </location>
</feature>
<feature type="region of interest" description="Disordered" evidence="2">
    <location>
        <begin position="1109"/>
        <end position="1128"/>
    </location>
</feature>
<feature type="compositionally biased region" description="Basic residues" evidence="2">
    <location>
        <begin position="72"/>
        <end position="83"/>
    </location>
</feature>
<feature type="compositionally biased region" description="Basic residues" evidence="2">
    <location>
        <begin position="183"/>
        <end position="199"/>
    </location>
</feature>
<feature type="compositionally biased region" description="Polar residues" evidence="2">
    <location>
        <begin position="201"/>
        <end position="211"/>
    </location>
</feature>
<feature type="compositionally biased region" description="Basic and acidic residues" evidence="2">
    <location>
        <begin position="250"/>
        <end position="280"/>
    </location>
</feature>
<feature type="compositionally biased region" description="Basic and acidic residues" evidence="2">
    <location>
        <begin position="287"/>
        <end position="300"/>
    </location>
</feature>
<feature type="compositionally biased region" description="Polar residues" evidence="2">
    <location>
        <begin position="329"/>
        <end position="345"/>
    </location>
</feature>
<feature type="compositionally biased region" description="Basic and acidic residues" evidence="2">
    <location>
        <begin position="349"/>
        <end position="370"/>
    </location>
</feature>
<feature type="compositionally biased region" description="Basic and acidic residues" evidence="2">
    <location>
        <begin position="379"/>
        <end position="408"/>
    </location>
</feature>
<feature type="compositionally biased region" description="Polar residues" evidence="2">
    <location>
        <begin position="409"/>
        <end position="422"/>
    </location>
</feature>
<feature type="compositionally biased region" description="Acidic residues" evidence="2">
    <location>
        <begin position="466"/>
        <end position="478"/>
    </location>
</feature>
<feature type="compositionally biased region" description="Basic and acidic residues" evidence="2">
    <location>
        <begin position="484"/>
        <end position="497"/>
    </location>
</feature>
<feature type="compositionally biased region" description="Basic and acidic residues" evidence="2">
    <location>
        <begin position="508"/>
        <end position="527"/>
    </location>
</feature>
<feature type="compositionally biased region" description="Basic and acidic residues" evidence="2">
    <location>
        <begin position="594"/>
        <end position="622"/>
    </location>
</feature>
<feature type="compositionally biased region" description="Basic and acidic residues" evidence="2">
    <location>
        <begin position="631"/>
        <end position="672"/>
    </location>
</feature>
<feature type="compositionally biased region" description="Basic and acidic residues" evidence="2">
    <location>
        <begin position="684"/>
        <end position="711"/>
    </location>
</feature>
<feature type="compositionally biased region" description="Polar residues" evidence="2">
    <location>
        <begin position="728"/>
        <end position="739"/>
    </location>
</feature>
<feature type="compositionally biased region" description="Basic and acidic residues" evidence="2">
    <location>
        <begin position="753"/>
        <end position="783"/>
    </location>
</feature>
<feature type="compositionally biased region" description="Acidic residues" evidence="2">
    <location>
        <begin position="855"/>
        <end position="868"/>
    </location>
</feature>
<feature type="compositionally biased region" description="Basic and acidic residues" evidence="2">
    <location>
        <begin position="910"/>
        <end position="920"/>
    </location>
</feature>
<feature type="compositionally biased region" description="Basic and acidic residues" evidence="2">
    <location>
        <begin position="935"/>
        <end position="948"/>
    </location>
</feature>
<feature type="compositionally biased region" description="Basic and acidic residues" evidence="2">
    <location>
        <begin position="986"/>
        <end position="999"/>
    </location>
</feature>
<feature type="compositionally biased region" description="Basic and acidic residues" evidence="2">
    <location>
        <begin position="1062"/>
        <end position="1071"/>
    </location>
</feature>
<feature type="compositionally biased region" description="Basic and acidic residues" evidence="2">
    <location>
        <begin position="1118"/>
        <end position="1127"/>
    </location>
</feature>
<feature type="modified residue" description="Phosphoserine" evidence="4 5 7">
    <location>
        <position position="180"/>
    </location>
</feature>
<feature type="modified residue" description="Phosphoserine" evidence="7">
    <location>
        <position position="462"/>
    </location>
</feature>
<feature type="modified residue" description="Phosphoserine" evidence="7">
    <location>
        <position position="523"/>
    </location>
</feature>
<feature type="modified residue" description="Phosphothreonine" evidence="6 7">
    <location>
        <position position="861"/>
    </location>
</feature>
<feature type="modified residue" description="Phosphoserine" evidence="6 7">
    <location>
        <position position="975"/>
    </location>
</feature>
<feature type="modified residue" description="Phosphoserine" evidence="7">
    <location>
        <position position="1037"/>
    </location>
</feature>
<feature type="modified residue" description="Phosphoserine" evidence="6 7">
    <location>
        <position position="1046"/>
    </location>
</feature>
<feature type="helix" evidence="9">
    <location>
        <begin position="1133"/>
        <end position="1139"/>
    </location>
</feature>
<feature type="strand" evidence="8">
    <location>
        <begin position="1144"/>
        <end position="1148"/>
    </location>
</feature>
<feature type="helix" evidence="8">
    <location>
        <begin position="1157"/>
        <end position="1170"/>
    </location>
</feature>
<feature type="strand" evidence="8">
    <location>
        <begin position="1176"/>
        <end position="1179"/>
    </location>
</feature>
<feature type="turn" evidence="8">
    <location>
        <begin position="1180"/>
        <end position="1182"/>
    </location>
</feature>
<feature type="helix" evidence="8">
    <location>
        <begin position="1184"/>
        <end position="1193"/>
    </location>
</feature>
<feature type="strand" evidence="8">
    <location>
        <begin position="1201"/>
        <end position="1204"/>
    </location>
</feature>
<feature type="turn" evidence="8">
    <location>
        <begin position="1205"/>
        <end position="1207"/>
    </location>
</feature>
<feature type="strand" evidence="8">
    <location>
        <begin position="1208"/>
        <end position="1212"/>
    </location>
</feature>
<feature type="helix" evidence="8">
    <location>
        <begin position="1213"/>
        <end position="1219"/>
    </location>
</feature>
<feature type="helix" evidence="8">
    <location>
        <begin position="1224"/>
        <end position="1228"/>
    </location>
</feature>
<gene>
    <name type="ordered locus">YFR016C</name>
</gene>
<reference key="1">
    <citation type="journal article" date="1995" name="Nat. Genet.">
        <title>Analysis of the nucleotide sequence of chromosome VI from Saccharomyces cerevisiae.</title>
        <authorList>
            <person name="Murakami Y."/>
            <person name="Naitou M."/>
            <person name="Hagiwara H."/>
            <person name="Shibata T."/>
            <person name="Ozawa M."/>
            <person name="Sasanuma S."/>
            <person name="Sasanuma M."/>
            <person name="Tsuchiya Y."/>
            <person name="Soeda E."/>
            <person name="Yokoyama K."/>
            <person name="Yamazaki M."/>
            <person name="Tashiro H."/>
            <person name="Eki T."/>
        </authorList>
    </citation>
    <scope>NUCLEOTIDE SEQUENCE [LARGE SCALE GENOMIC DNA]</scope>
    <source>
        <strain>ATCC 204508 / S288c</strain>
    </source>
</reference>
<reference key="2">
    <citation type="journal article" date="2014" name="G3 (Bethesda)">
        <title>The reference genome sequence of Saccharomyces cerevisiae: Then and now.</title>
        <authorList>
            <person name="Engel S.R."/>
            <person name="Dietrich F.S."/>
            <person name="Fisk D.G."/>
            <person name="Binkley G."/>
            <person name="Balakrishnan R."/>
            <person name="Costanzo M.C."/>
            <person name="Dwight S.S."/>
            <person name="Hitz B.C."/>
            <person name="Karra K."/>
            <person name="Nash R.S."/>
            <person name="Weng S."/>
            <person name="Wong E.D."/>
            <person name="Lloyd P."/>
            <person name="Skrzypek M.S."/>
            <person name="Miyasato S.R."/>
            <person name="Simison M."/>
            <person name="Cherry J.M."/>
        </authorList>
    </citation>
    <scope>GENOME REANNOTATION</scope>
    <source>
        <strain>ATCC 204508 / S288c</strain>
    </source>
</reference>
<reference key="3">
    <citation type="journal article" date="2003" name="Nature">
        <title>Global analysis of protein expression in yeast.</title>
        <authorList>
            <person name="Ghaemmaghami S."/>
            <person name="Huh W.-K."/>
            <person name="Bower K."/>
            <person name="Howson R.W."/>
            <person name="Belle A."/>
            <person name="Dephoure N."/>
            <person name="O'Shea E.K."/>
            <person name="Weissman J.S."/>
        </authorList>
    </citation>
    <scope>LEVEL OF PROTEIN EXPRESSION [LARGE SCALE ANALYSIS]</scope>
</reference>
<reference key="4">
    <citation type="journal article" date="2007" name="J. Proteome Res.">
        <title>Large-scale phosphorylation analysis of alpha-factor-arrested Saccharomyces cerevisiae.</title>
        <authorList>
            <person name="Li X."/>
            <person name="Gerber S.A."/>
            <person name="Rudner A.D."/>
            <person name="Beausoleil S.A."/>
            <person name="Haas W."/>
            <person name="Villen J."/>
            <person name="Elias J.E."/>
            <person name="Gygi S.P."/>
        </authorList>
    </citation>
    <scope>PHOSPHORYLATION [LARGE SCALE ANALYSIS] AT SER-180</scope>
    <scope>IDENTIFICATION BY MASS SPECTROMETRY [LARGE SCALE ANALYSIS]</scope>
    <source>
        <strain>ADR376</strain>
    </source>
</reference>
<reference key="5">
    <citation type="journal article" date="2007" name="Proc. Natl. Acad. Sci. U.S.A.">
        <title>Analysis of phosphorylation sites on proteins from Saccharomyces cerevisiae by electron transfer dissociation (ETD) mass spectrometry.</title>
        <authorList>
            <person name="Chi A."/>
            <person name="Huttenhower C."/>
            <person name="Geer L.Y."/>
            <person name="Coon J.J."/>
            <person name="Syka J.E.P."/>
            <person name="Bai D.L."/>
            <person name="Shabanowitz J."/>
            <person name="Burke D.J."/>
            <person name="Troyanskaya O.G."/>
            <person name="Hunt D.F."/>
        </authorList>
    </citation>
    <scope>PHOSPHORYLATION [LARGE SCALE ANALYSIS] AT SER-180</scope>
    <scope>IDENTIFICATION BY MASS SPECTROMETRY [LARGE SCALE ANALYSIS]</scope>
</reference>
<reference key="6">
    <citation type="journal article" date="2008" name="Mol. Cell. Proteomics">
        <title>A multidimensional chromatography technology for in-depth phosphoproteome analysis.</title>
        <authorList>
            <person name="Albuquerque C.P."/>
            <person name="Smolka M.B."/>
            <person name="Payne S.H."/>
            <person name="Bafna V."/>
            <person name="Eng J."/>
            <person name="Zhou H."/>
        </authorList>
    </citation>
    <scope>PHOSPHORYLATION [LARGE SCALE ANALYSIS] AT THR-861; SER-975 AND SER-1046</scope>
    <scope>IDENTIFICATION BY MASS SPECTROMETRY [LARGE SCALE ANALYSIS]</scope>
</reference>
<reference key="7">
    <citation type="journal article" date="2009" name="Science">
        <title>Global analysis of Cdk1 substrate phosphorylation sites provides insights into evolution.</title>
        <authorList>
            <person name="Holt L.J."/>
            <person name="Tuch B.B."/>
            <person name="Villen J."/>
            <person name="Johnson A.D."/>
            <person name="Gygi S.P."/>
            <person name="Morgan D.O."/>
        </authorList>
    </citation>
    <scope>PHOSPHORYLATION [LARGE SCALE ANALYSIS] AT SER-180; SER-462; SER-523; THR-861; SER-975; SER-1037 AND SER-1046</scope>
    <scope>IDENTIFICATION BY MASS SPECTROMETRY [LARGE SCALE ANALYSIS]</scope>
</reference>
<dbReference type="EMBL" id="D50617">
    <property type="protein sequence ID" value="BAA09255.1"/>
    <property type="molecule type" value="Genomic_DNA"/>
</dbReference>
<dbReference type="EMBL" id="BK006940">
    <property type="protein sequence ID" value="DAA12457.1"/>
    <property type="molecule type" value="Genomic_DNA"/>
</dbReference>
<dbReference type="PIR" id="S56271">
    <property type="entry name" value="S56271"/>
</dbReference>
<dbReference type="PDB" id="6ABR">
    <property type="method" value="X-ray"/>
    <property type="resolution" value="2.00 A"/>
    <property type="chains" value="A/B=1110-1233"/>
</dbReference>
<dbReference type="PDB" id="6ABS">
    <property type="method" value="X-ray"/>
    <property type="resolution" value="2.20 A"/>
    <property type="chains" value="A/B=1110-1233"/>
</dbReference>
<dbReference type="PDBsum" id="6ABR"/>
<dbReference type="PDBsum" id="6ABS"/>
<dbReference type="SMR" id="P43597"/>
<dbReference type="BioGRID" id="31168">
    <property type="interactions" value="53"/>
</dbReference>
<dbReference type="DIP" id="DIP-4195N"/>
<dbReference type="FunCoup" id="P43597">
    <property type="interactions" value="20"/>
</dbReference>
<dbReference type="IntAct" id="P43597">
    <property type="interactions" value="13"/>
</dbReference>
<dbReference type="STRING" id="4932.YFR016C"/>
<dbReference type="iPTMnet" id="P43597"/>
<dbReference type="PaxDb" id="4932-YFR016C"/>
<dbReference type="PeptideAtlas" id="P43597"/>
<dbReference type="EnsemblFungi" id="YFR016C_mRNA">
    <property type="protein sequence ID" value="YFR016C"/>
    <property type="gene ID" value="YFR016C"/>
</dbReference>
<dbReference type="KEGG" id="sce:YFR016C"/>
<dbReference type="AGR" id="SGD:S000001912"/>
<dbReference type="SGD" id="S000001912">
    <property type="gene designation" value="YFR016C"/>
</dbReference>
<dbReference type="VEuPathDB" id="FungiDB:YFR016C"/>
<dbReference type="eggNOG" id="KOG1181">
    <property type="taxonomic scope" value="Eukaryota"/>
</dbReference>
<dbReference type="HOGENOM" id="CLU_267481_0_0_1"/>
<dbReference type="InParanoid" id="P43597"/>
<dbReference type="OMA" id="KFEKPNE"/>
<dbReference type="OrthoDB" id="9932926at2759"/>
<dbReference type="BioCyc" id="YEAST:G3O-30468-MONOMER"/>
<dbReference type="BioGRID-ORCS" id="850570">
    <property type="hits" value="0 hits in 10 CRISPR screens"/>
</dbReference>
<dbReference type="PRO" id="PR:P43597"/>
<dbReference type="Proteomes" id="UP000002311">
    <property type="component" value="Chromosome VI"/>
</dbReference>
<dbReference type="RNAct" id="P43597">
    <property type="molecule type" value="protein"/>
</dbReference>
<dbReference type="GO" id="GO:0005933">
    <property type="term" value="C:cellular bud"/>
    <property type="evidence" value="ECO:0007005"/>
    <property type="project" value="SGD"/>
</dbReference>
<dbReference type="GO" id="GO:0005935">
    <property type="term" value="C:cellular bud neck"/>
    <property type="evidence" value="ECO:0000314"/>
    <property type="project" value="SGD"/>
</dbReference>
<dbReference type="GO" id="GO:0005934">
    <property type="term" value="C:cellular bud tip"/>
    <property type="evidence" value="ECO:0000314"/>
    <property type="project" value="SGD"/>
</dbReference>
<dbReference type="GO" id="GO:0005737">
    <property type="term" value="C:cytoplasm"/>
    <property type="evidence" value="ECO:0007005"/>
    <property type="project" value="SGD"/>
</dbReference>
<dbReference type="GO" id="GO:0032233">
    <property type="term" value="P:positive regulation of actin filament bundle assembly"/>
    <property type="evidence" value="ECO:0000314"/>
    <property type="project" value="SGD"/>
</dbReference>
<dbReference type="Gene3D" id="3.40.30.10">
    <property type="entry name" value="Glutaredoxin"/>
    <property type="match status" value="1"/>
</dbReference>
<dbReference type="InterPro" id="IPR036249">
    <property type="entry name" value="Thioredoxin-like_sf"/>
</dbReference>
<dbReference type="SUPFAM" id="SSF52833">
    <property type="entry name" value="Thioredoxin-like"/>
    <property type="match status" value="1"/>
</dbReference>
<dbReference type="PROSITE" id="PS51354">
    <property type="entry name" value="GLUTAREDOXIN_2"/>
    <property type="match status" value="1"/>
</dbReference>
<evidence type="ECO:0000255" key="1">
    <source>
        <dbReference type="PROSITE-ProRule" id="PRU00686"/>
    </source>
</evidence>
<evidence type="ECO:0000256" key="2">
    <source>
        <dbReference type="SAM" id="MobiDB-lite"/>
    </source>
</evidence>
<evidence type="ECO:0000269" key="3">
    <source>
    </source>
</evidence>
<evidence type="ECO:0007744" key="4">
    <source>
    </source>
</evidence>
<evidence type="ECO:0007744" key="5">
    <source>
    </source>
</evidence>
<evidence type="ECO:0007744" key="6">
    <source>
    </source>
</evidence>
<evidence type="ECO:0007744" key="7">
    <source>
    </source>
</evidence>
<evidence type="ECO:0007829" key="8">
    <source>
        <dbReference type="PDB" id="6ABR"/>
    </source>
</evidence>
<evidence type="ECO:0007829" key="9">
    <source>
        <dbReference type="PDB" id="6ABS"/>
    </source>
</evidence>
<sequence>MVESLTVENQEHNVQPPSVTSAGDSYSTLATDLPLPSTNDIIESRDQLTESDLDEAINATENFAQELSSQRKSSKLKGHKKKNQGQIKANRDRDTIVKLSSSVGETEEASTRDAISHDLERKDDVIEIATDTINDATESPTQIPIDVNVVIKETSTNNVAEGTENVPPIKESTGIEVGNSPITRRKKNKKKKTTNRRGRNSSNPADTTDLSKQSTLDSILVGIEEYLQEDGSKNEDIKVNIVQDEPVNVEKMDIRTRNESSDKTFDIDVPNKDNVDETSSKSENNINEEKAEHTLPREENEILNVNEGNAASFKHQLEPHGLEAGDENGQASTKDVESESLTKNGFNFKENESKHLKAGEKQQTESDRDGISPSVLAKNQKETEIGKEDHVFEQKDKEDEKCRKELSVNHENNMSHNFNAAGSDSIIPPETERETYDDETMGPTKRISDNEKNLQHGTNDISVEVEKEEEEEEEEEENSTFSKVKKENVTGEQEAVRNNEVSGTEEESTSKGEEIMGGDEKQSEAGEKSSIIEIEGSANSAKISKDNLVLEDEAEAPTQENKPTEVVGEIDIPDAPRDDVEIVEAVEKNIIPEDLEVAKEDQEGEQVKLDEPVKAMKDDKIAMRGAESISEDMKKKQEGTAELSNEKAKKEVDETARESAEGVEVEKSKTPESPKVVKRCTSGRPEDLQINERDPEVLKEDVRVPDEDVKPEIATTIENSEEEDPKSQRVQISTEQAETTQKDMGDVGSTTSFKEEEKPKRFEITQEGDKITGKDTNHEHGEATEAASENSKASDVGTAEKYIEPSSESVKKDTEEDAEVENSEKTEFIKVKAELENLDAPKEAEVTAELNKENEDVEVDTEEDAEVENSEKTEFIKVKAELGNLDAPKEAEVTAELNKENEDVEVAATSKEDIETKCSEPAETPIEDGTCTEAEVSKKDAEAVTKEDENMENSKIAEALKDVTGDQEIDDINISDEFQRTVELPELEKQDIKDNKGEDKELEVEETEKETSLPDLVVEENITEEKNEIKQEEEEVSQLDFNETESISKEAPNNDENGFEDQSTRENPKKASADDIFKDILDETNEFLEQLKIVDDSELNALLQSLDAKDSTTQTTEQSKKNNDKPQDVITTSEIRKLNEKEPVYIYTSLAGGGFHMIPRTNRLSTILTANRIPFTYRDLGTDDEARKVWKTFSKGRSLPGVVRGHNDLIGNWEEIEEANEDYKLRELIYDTI</sequence>
<accession>P43597</accession>
<accession>D6VTP7</accession>
<organism>
    <name type="scientific">Saccharomyces cerevisiae (strain ATCC 204508 / S288c)</name>
    <name type="common">Baker's yeast</name>
    <dbReference type="NCBI Taxonomy" id="559292"/>
    <lineage>
        <taxon>Eukaryota</taxon>
        <taxon>Fungi</taxon>
        <taxon>Dikarya</taxon>
        <taxon>Ascomycota</taxon>
        <taxon>Saccharomycotina</taxon>
        <taxon>Saccharomycetes</taxon>
        <taxon>Saccharomycetales</taxon>
        <taxon>Saccharomycetaceae</taxon>
        <taxon>Saccharomyces</taxon>
    </lineage>
</organism>
<comment type="miscellaneous">
    <text evidence="3">Present with 704 molecules/cell in log phase SD medium.</text>
</comment>